<comment type="function">
    <text evidence="1">Quinone reductase that provides resistance to thiol-specific stress caused by electrophilic quinones.</text>
</comment>
<comment type="function">
    <text evidence="1">Also exhibits azoreductase activity. Catalyzes the reductive cleavage of the azo bond in aromatic azo compounds to the corresponding amines.</text>
</comment>
<comment type="catalytic activity">
    <reaction evidence="1">
        <text>2 a quinone + NADH + H(+) = 2 a 1,4-benzosemiquinone + NAD(+)</text>
        <dbReference type="Rhea" id="RHEA:65952"/>
        <dbReference type="ChEBI" id="CHEBI:15378"/>
        <dbReference type="ChEBI" id="CHEBI:57540"/>
        <dbReference type="ChEBI" id="CHEBI:57945"/>
        <dbReference type="ChEBI" id="CHEBI:132124"/>
        <dbReference type="ChEBI" id="CHEBI:134225"/>
    </reaction>
</comment>
<comment type="catalytic activity">
    <reaction evidence="1">
        <text>N,N-dimethyl-1,4-phenylenediamine + anthranilate + 2 NAD(+) = 2-(4-dimethylaminophenyl)diazenylbenzoate + 2 NADH + 2 H(+)</text>
        <dbReference type="Rhea" id="RHEA:55872"/>
        <dbReference type="ChEBI" id="CHEBI:15378"/>
        <dbReference type="ChEBI" id="CHEBI:15783"/>
        <dbReference type="ChEBI" id="CHEBI:16567"/>
        <dbReference type="ChEBI" id="CHEBI:57540"/>
        <dbReference type="ChEBI" id="CHEBI:57945"/>
        <dbReference type="ChEBI" id="CHEBI:71579"/>
        <dbReference type="EC" id="1.7.1.17"/>
    </reaction>
</comment>
<comment type="cofactor">
    <cofactor evidence="1">
        <name>FMN</name>
        <dbReference type="ChEBI" id="CHEBI:58210"/>
    </cofactor>
    <text evidence="1">Binds 1 FMN per subunit.</text>
</comment>
<comment type="subunit">
    <text evidence="1">Homodimer.</text>
</comment>
<comment type="similarity">
    <text evidence="1">Belongs to the azoreductase type 1 family.</text>
</comment>
<reference key="1">
    <citation type="journal article" date="2006" name="Genome Res.">
        <title>Skewed genomic variability in strains of the toxigenic bacterial pathogen, Clostridium perfringens.</title>
        <authorList>
            <person name="Myers G.S.A."/>
            <person name="Rasko D.A."/>
            <person name="Cheung J.K."/>
            <person name="Ravel J."/>
            <person name="Seshadri R."/>
            <person name="DeBoy R.T."/>
            <person name="Ren Q."/>
            <person name="Varga J."/>
            <person name="Awad M.M."/>
            <person name="Brinkac L.M."/>
            <person name="Daugherty S.C."/>
            <person name="Haft D.H."/>
            <person name="Dodson R.J."/>
            <person name="Madupu R."/>
            <person name="Nelson W.C."/>
            <person name="Rosovitz M.J."/>
            <person name="Sullivan S.A."/>
            <person name="Khouri H."/>
            <person name="Dimitrov G.I."/>
            <person name="Watkins K.L."/>
            <person name="Mulligan S."/>
            <person name="Benton J."/>
            <person name="Radune D."/>
            <person name="Fisher D.J."/>
            <person name="Atkins H.S."/>
            <person name="Hiscox T."/>
            <person name="Jost B.H."/>
            <person name="Billington S.J."/>
            <person name="Songer J.G."/>
            <person name="McClane B.A."/>
            <person name="Titball R.W."/>
            <person name="Rood J.I."/>
            <person name="Melville S.B."/>
            <person name="Paulsen I.T."/>
        </authorList>
    </citation>
    <scope>NUCLEOTIDE SEQUENCE [LARGE SCALE GENOMIC DNA]</scope>
    <source>
        <strain>ATCC 13124 / DSM 756 / JCM 1290 / NCIMB 6125 / NCTC 8237 / S 107 / Type A</strain>
    </source>
</reference>
<keyword id="KW-0285">Flavoprotein</keyword>
<keyword id="KW-0288">FMN</keyword>
<keyword id="KW-0520">NAD</keyword>
<keyword id="KW-0560">Oxidoreductase</keyword>
<feature type="chain" id="PRO_1000066500" description="FMN-dependent NADH:quinone oxidoreductase">
    <location>
        <begin position="1"/>
        <end position="198"/>
    </location>
</feature>
<feature type="binding site" evidence="1">
    <location>
        <begin position="92"/>
        <end position="95"/>
    </location>
    <ligand>
        <name>FMN</name>
        <dbReference type="ChEBI" id="CHEBI:58210"/>
    </ligand>
</feature>
<feature type="binding site" evidence="1">
    <location>
        <begin position="136"/>
        <end position="139"/>
    </location>
    <ligand>
        <name>FMN</name>
        <dbReference type="ChEBI" id="CHEBI:58210"/>
    </ligand>
</feature>
<protein>
    <recommendedName>
        <fullName evidence="1">FMN-dependent NADH:quinone oxidoreductase</fullName>
        <ecNumber evidence="1">1.6.5.-</ecNumber>
    </recommendedName>
    <alternativeName>
        <fullName evidence="1">Azo-dye reductase</fullName>
    </alternativeName>
    <alternativeName>
        <fullName evidence="1">FMN-dependent NADH-azo compound oxidoreductase</fullName>
    </alternativeName>
    <alternativeName>
        <fullName evidence="1">FMN-dependent NADH-azoreductase</fullName>
        <ecNumber evidence="1">1.7.1.17</ecNumber>
    </alternativeName>
</protein>
<name>AZOR_CLOP1</name>
<organism>
    <name type="scientific">Clostridium perfringens (strain ATCC 13124 / DSM 756 / JCM 1290 / NCIMB 6125 / NCTC 8237 / Type A)</name>
    <dbReference type="NCBI Taxonomy" id="195103"/>
    <lineage>
        <taxon>Bacteria</taxon>
        <taxon>Bacillati</taxon>
        <taxon>Bacillota</taxon>
        <taxon>Clostridia</taxon>
        <taxon>Eubacteriales</taxon>
        <taxon>Clostridiaceae</taxon>
        <taxon>Clostridium</taxon>
    </lineage>
</organism>
<evidence type="ECO:0000255" key="1">
    <source>
        <dbReference type="HAMAP-Rule" id="MF_01216"/>
    </source>
</evidence>
<gene>
    <name evidence="1" type="primary">azoR</name>
    <name type="ordered locus">CPF_0793</name>
</gene>
<dbReference type="EC" id="1.6.5.-" evidence="1"/>
<dbReference type="EC" id="1.7.1.17" evidence="1"/>
<dbReference type="EMBL" id="CP000246">
    <property type="protein sequence ID" value="ABG82376.1"/>
    <property type="molecule type" value="Genomic_DNA"/>
</dbReference>
<dbReference type="RefSeq" id="WP_004460381.1">
    <property type="nucleotide sequence ID" value="NC_008261.1"/>
</dbReference>
<dbReference type="SMR" id="Q0TSZ6"/>
<dbReference type="STRING" id="195103.CPF_0793"/>
<dbReference type="PaxDb" id="195103-CPF_0793"/>
<dbReference type="KEGG" id="cpf:CPF_0793"/>
<dbReference type="eggNOG" id="COG1182">
    <property type="taxonomic scope" value="Bacteria"/>
</dbReference>
<dbReference type="HOGENOM" id="CLU_088964_3_1_9"/>
<dbReference type="Proteomes" id="UP000001823">
    <property type="component" value="Chromosome"/>
</dbReference>
<dbReference type="GO" id="GO:0009055">
    <property type="term" value="F:electron transfer activity"/>
    <property type="evidence" value="ECO:0007669"/>
    <property type="project" value="UniProtKB-UniRule"/>
</dbReference>
<dbReference type="GO" id="GO:0010181">
    <property type="term" value="F:FMN binding"/>
    <property type="evidence" value="ECO:0007669"/>
    <property type="project" value="UniProtKB-UniRule"/>
</dbReference>
<dbReference type="GO" id="GO:0016652">
    <property type="term" value="F:oxidoreductase activity, acting on NAD(P)H as acceptor"/>
    <property type="evidence" value="ECO:0007669"/>
    <property type="project" value="UniProtKB-UniRule"/>
</dbReference>
<dbReference type="GO" id="GO:0016655">
    <property type="term" value="F:oxidoreductase activity, acting on NAD(P)H, quinone or similar compound as acceptor"/>
    <property type="evidence" value="ECO:0007669"/>
    <property type="project" value="InterPro"/>
</dbReference>
<dbReference type="Gene3D" id="3.40.50.360">
    <property type="match status" value="1"/>
</dbReference>
<dbReference type="HAMAP" id="MF_01216">
    <property type="entry name" value="Azoreductase_type1"/>
    <property type="match status" value="1"/>
</dbReference>
<dbReference type="InterPro" id="IPR003680">
    <property type="entry name" value="Flavodoxin_fold"/>
</dbReference>
<dbReference type="InterPro" id="IPR029039">
    <property type="entry name" value="Flavoprotein-like_sf"/>
</dbReference>
<dbReference type="InterPro" id="IPR050104">
    <property type="entry name" value="FMN-dep_NADH:Q_OxRdtase_AzoR1"/>
</dbReference>
<dbReference type="InterPro" id="IPR023048">
    <property type="entry name" value="NADH:quinone_OxRdtase_FMN_depd"/>
</dbReference>
<dbReference type="PANTHER" id="PTHR43741">
    <property type="entry name" value="FMN-DEPENDENT NADH-AZOREDUCTASE 1"/>
    <property type="match status" value="1"/>
</dbReference>
<dbReference type="PANTHER" id="PTHR43741:SF7">
    <property type="entry name" value="FMN-DEPENDENT NADH:QUINONE OXIDOREDUCTASE"/>
    <property type="match status" value="1"/>
</dbReference>
<dbReference type="Pfam" id="PF02525">
    <property type="entry name" value="Flavodoxin_2"/>
    <property type="match status" value="1"/>
</dbReference>
<dbReference type="SUPFAM" id="SSF52218">
    <property type="entry name" value="Flavoproteins"/>
    <property type="match status" value="1"/>
</dbReference>
<accession>Q0TSZ6</accession>
<proteinExistence type="inferred from homology"/>
<sequence>MSKVLYIKANIKNEGESRTFKVSDSFVEEYKKNNPEDEIITLDLYKENIDFLRADDLGKLFGPKDEESKNNSILKYAYQFADADKYIIAAPMWNLSFPAILKAYIDYVSVSGITFKYTAEGPVGLLNNKKAVHIVSRGGGYDNSPYEMGDRYLRTILGFFGIKDIETIAIDNLDVMGVNVEEKVEEGIEKAISLAKKF</sequence>